<comment type="function">
    <text evidence="1 2">G protein-coupled receptor which associates with the patched protein (PTCH) to transduce hedgehog protein signaling. Binding of sonic hedgehog (SHH) to its receptor patched prevents inhibition of smoothened (SMO) by patched. When active, SMO binds to and sequesters protein kinase A catalytic subunit PRKACA at the cell membrane, preventing PRKACA-mediated phosphorylation of GLI transcription factors which releases the GLI proteins from PRKACA-mediated inhibition and allows for transcriptional activation of hedgehog pathway target genes. Required for the accumulation of KIF7, GLI2 and GLI3 in the cilia. Interacts with DLG5 at the ciliary base to induce the accumulation of KIF7 and GLI2 at the ciliary tip for GLI2 activation.</text>
</comment>
<comment type="subunit">
    <text evidence="1 2">Homodimer. Interacts (via C-terminus) with protein kinase A catalytic subunit PRKACA; interacts with free PRKACA subunits and the interaction leads to sequestration of PRKACA at the membrane, preventing PRKACA-mediated phosphorylation of GLI transcription factors. Interacts with ARRB2. Interacts with KIF7. Interacts with BBS5 and BBS7; the interactions are indicative for the association of SMO with the BBsome complex to facilitate ciliary localization of SMO. Interacts with DLG5 and SDCBP. Interacts with GAS8/DRC4.</text>
</comment>
<comment type="subcellular location">
    <subcellularLocation>
        <location evidence="1">Cell membrane</location>
        <topology evidence="3">Multi-pass membrane protein</topology>
    </subcellularLocation>
    <subcellularLocation>
        <location evidence="1">Cell projection</location>
        <location evidence="1">Cilium</location>
    </subcellularLocation>
    <text evidence="1">Cilium localization is promoted by SHH and is required for activity.</text>
</comment>
<comment type="tissue specificity">
    <text>In embryo, found in the early neural folds and neural tube, pre-somitic mesoderm and somites, developing limb bud, gut, eye, testes, cartilage, muscle, lung, epiglottis, thymus, tongue, jaw, taste buds, teeth, and skin. In adult, found in multiple tissues including heart, brain, liver, lung, skeletal muscle, kidney and testis.</text>
</comment>
<comment type="domain">
    <text evidence="1">The N-terminal extracellular domain mediates sterol-binding which is required for maximal activation of signaling. Contains a second sterol-binding site within the seven-transmembrane pocket which is also required for activation. The activating sterol is likely to be cholesterol. The extracellular site is required for SHH-induced activity while the site within the transmembrane pocket regulates basal signaling in the absence of SHH.</text>
</comment>
<comment type="PTM">
    <text evidence="1">Phosphorylation by GRK kinases is required for interaction with protein kinase A catalytic subunit PRKACA.</text>
</comment>
<comment type="similarity">
    <text evidence="6">Belongs to the G-protein coupled receptor Fz/Smo family.</text>
</comment>
<dbReference type="EMBL" id="U84402">
    <property type="protein sequence ID" value="AAB41789.1"/>
    <property type="molecule type" value="mRNA"/>
</dbReference>
<dbReference type="RefSeq" id="NP_036939.1">
    <property type="nucleotide sequence ID" value="NM_012807.1"/>
</dbReference>
<dbReference type="SMR" id="P97698"/>
<dbReference type="FunCoup" id="P97698">
    <property type="interactions" value="2585"/>
</dbReference>
<dbReference type="STRING" id="10116.ENSRNOP00000011356"/>
<dbReference type="ChEMBL" id="CHEMBL1795175"/>
<dbReference type="GlyCosmos" id="P97698">
    <property type="glycosylation" value="3 sites, No reported glycans"/>
</dbReference>
<dbReference type="GlyGen" id="P97698">
    <property type="glycosylation" value="3 sites"/>
</dbReference>
<dbReference type="iPTMnet" id="P97698"/>
<dbReference type="PhosphoSitePlus" id="P97698"/>
<dbReference type="PaxDb" id="10116-ENSRNOP00000011356"/>
<dbReference type="GeneID" id="25273"/>
<dbReference type="KEGG" id="rno:25273"/>
<dbReference type="UCSC" id="RGD:3726">
    <property type="organism name" value="rat"/>
</dbReference>
<dbReference type="AGR" id="RGD:3726"/>
<dbReference type="CTD" id="6608"/>
<dbReference type="RGD" id="3726">
    <property type="gene designation" value="Smo"/>
</dbReference>
<dbReference type="eggNOG" id="KOG3577">
    <property type="taxonomic scope" value="Eukaryota"/>
</dbReference>
<dbReference type="InParanoid" id="P97698"/>
<dbReference type="OrthoDB" id="10064659at2759"/>
<dbReference type="PhylomeDB" id="P97698"/>
<dbReference type="Reactome" id="R-RNO-5610787">
    <property type="pathway name" value="Hedgehog 'off' state"/>
</dbReference>
<dbReference type="Reactome" id="R-RNO-5620922">
    <property type="pathway name" value="BBSome-mediated cargo-targeting to cilium"/>
</dbReference>
<dbReference type="Reactome" id="R-RNO-5632684">
    <property type="pathway name" value="Hedgehog 'on' state"/>
</dbReference>
<dbReference type="Reactome" id="R-RNO-5635838">
    <property type="pathway name" value="Activation of SMO"/>
</dbReference>
<dbReference type="PRO" id="PR:P97698"/>
<dbReference type="Proteomes" id="UP000002494">
    <property type="component" value="Unplaced"/>
</dbReference>
<dbReference type="GO" id="GO:0097731">
    <property type="term" value="C:9+0 non-motile cilium"/>
    <property type="evidence" value="ECO:0000266"/>
    <property type="project" value="RGD"/>
</dbReference>
<dbReference type="GO" id="GO:0044295">
    <property type="term" value="C:axonal growth cone"/>
    <property type="evidence" value="ECO:0000314"/>
    <property type="project" value="RGD"/>
</dbReference>
<dbReference type="GO" id="GO:0005901">
    <property type="term" value="C:caveola"/>
    <property type="evidence" value="ECO:0000266"/>
    <property type="project" value="RGD"/>
</dbReference>
<dbReference type="GO" id="GO:0005814">
    <property type="term" value="C:centriole"/>
    <property type="evidence" value="ECO:0000266"/>
    <property type="project" value="RGD"/>
</dbReference>
<dbReference type="GO" id="GO:0060170">
    <property type="term" value="C:ciliary membrane"/>
    <property type="evidence" value="ECO:0000266"/>
    <property type="project" value="RGD"/>
</dbReference>
<dbReference type="GO" id="GO:0005929">
    <property type="term" value="C:cilium"/>
    <property type="evidence" value="ECO:0000250"/>
    <property type="project" value="UniProtKB"/>
</dbReference>
<dbReference type="GO" id="GO:0005737">
    <property type="term" value="C:cytoplasm"/>
    <property type="evidence" value="ECO:0000266"/>
    <property type="project" value="RGD"/>
</dbReference>
<dbReference type="GO" id="GO:0030425">
    <property type="term" value="C:dendrite"/>
    <property type="evidence" value="ECO:0000314"/>
    <property type="project" value="RGD"/>
</dbReference>
<dbReference type="GO" id="GO:0044294">
    <property type="term" value="C:dendritic growth cone"/>
    <property type="evidence" value="ECO:0000314"/>
    <property type="project" value="RGD"/>
</dbReference>
<dbReference type="GO" id="GO:0005783">
    <property type="term" value="C:endoplasmic reticulum"/>
    <property type="evidence" value="ECO:0000266"/>
    <property type="project" value="RGD"/>
</dbReference>
<dbReference type="GO" id="GO:0005793">
    <property type="term" value="C:endoplasmic reticulum-Golgi intermediate compartment"/>
    <property type="evidence" value="ECO:0000266"/>
    <property type="project" value="RGD"/>
</dbReference>
<dbReference type="GO" id="GO:0005794">
    <property type="term" value="C:Golgi apparatus"/>
    <property type="evidence" value="ECO:0000266"/>
    <property type="project" value="RGD"/>
</dbReference>
<dbReference type="GO" id="GO:0043231">
    <property type="term" value="C:intracellular membrane-bounded organelle"/>
    <property type="evidence" value="ECO:0000266"/>
    <property type="project" value="RGD"/>
</dbReference>
<dbReference type="GO" id="GO:0005770">
    <property type="term" value="C:late endosome"/>
    <property type="evidence" value="ECO:0000266"/>
    <property type="project" value="RGD"/>
</dbReference>
<dbReference type="GO" id="GO:0043025">
    <property type="term" value="C:neuronal cell body"/>
    <property type="evidence" value="ECO:0000314"/>
    <property type="project" value="RGD"/>
</dbReference>
<dbReference type="GO" id="GO:0005886">
    <property type="term" value="C:plasma membrane"/>
    <property type="evidence" value="ECO:0000250"/>
    <property type="project" value="UniProtKB"/>
</dbReference>
<dbReference type="GO" id="GO:0098794">
    <property type="term" value="C:postsynapse"/>
    <property type="evidence" value="ECO:0000314"/>
    <property type="project" value="SynGO"/>
</dbReference>
<dbReference type="GO" id="GO:0004862">
    <property type="term" value="F:cAMP-dependent protein kinase inhibitor activity"/>
    <property type="evidence" value="ECO:0000266"/>
    <property type="project" value="RGD"/>
</dbReference>
<dbReference type="GO" id="GO:0004930">
    <property type="term" value="F:G protein-coupled receptor activity"/>
    <property type="evidence" value="ECO:0007669"/>
    <property type="project" value="UniProtKB-KW"/>
</dbReference>
<dbReference type="GO" id="GO:0008142">
    <property type="term" value="F:oxysterol binding"/>
    <property type="evidence" value="ECO:0000250"/>
    <property type="project" value="UniProtKB"/>
</dbReference>
<dbReference type="GO" id="GO:0005113">
    <property type="term" value="F:patched binding"/>
    <property type="evidence" value="ECO:0000266"/>
    <property type="project" value="RGD"/>
</dbReference>
<dbReference type="GO" id="GO:0034236">
    <property type="term" value="F:protein kinase A catalytic subunit binding"/>
    <property type="evidence" value="ECO:0000250"/>
    <property type="project" value="UniProtKB"/>
</dbReference>
<dbReference type="GO" id="GO:0140311">
    <property type="term" value="F:protein sequestering activity"/>
    <property type="evidence" value="ECO:0000250"/>
    <property type="project" value="UniProtKB"/>
</dbReference>
<dbReference type="GO" id="GO:0009952">
    <property type="term" value="P:anterior/posterior pattern specification"/>
    <property type="evidence" value="ECO:0000266"/>
    <property type="project" value="RGD"/>
</dbReference>
<dbReference type="GO" id="GO:0006915">
    <property type="term" value="P:apoptotic process"/>
    <property type="evidence" value="ECO:0000266"/>
    <property type="project" value="RGD"/>
</dbReference>
<dbReference type="GO" id="GO:0048143">
    <property type="term" value="P:astrocyte activation"/>
    <property type="evidence" value="ECO:0000266"/>
    <property type="project" value="RGD"/>
</dbReference>
<dbReference type="GO" id="GO:0060413">
    <property type="term" value="P:atrial septum morphogenesis"/>
    <property type="evidence" value="ECO:0000266"/>
    <property type="project" value="RGD"/>
</dbReference>
<dbReference type="GO" id="GO:0048846">
    <property type="term" value="P:axon extension involved in axon guidance"/>
    <property type="evidence" value="ECO:0000315"/>
    <property type="project" value="RGD"/>
</dbReference>
<dbReference type="GO" id="GO:0048468">
    <property type="term" value="P:cell development"/>
    <property type="evidence" value="ECO:0000266"/>
    <property type="project" value="RGD"/>
</dbReference>
<dbReference type="GO" id="GO:0001708">
    <property type="term" value="P:cell fate specification"/>
    <property type="evidence" value="ECO:0000266"/>
    <property type="project" value="RGD"/>
</dbReference>
<dbReference type="GO" id="GO:0008283">
    <property type="term" value="P:cell population proliferation"/>
    <property type="evidence" value="ECO:0000266"/>
    <property type="project" value="RGD"/>
</dbReference>
<dbReference type="GO" id="GO:0071397">
    <property type="term" value="P:cellular response to cholesterol"/>
    <property type="evidence" value="ECO:0000266"/>
    <property type="project" value="RGD"/>
</dbReference>
<dbReference type="GO" id="GO:0007417">
    <property type="term" value="P:central nervous system development"/>
    <property type="evidence" value="ECO:0000266"/>
    <property type="project" value="RGD"/>
</dbReference>
<dbReference type="GO" id="GO:0021953">
    <property type="term" value="P:central nervous system neuron differentiation"/>
    <property type="evidence" value="ECO:0000266"/>
    <property type="project" value="RGD"/>
</dbReference>
<dbReference type="GO" id="GO:0021696">
    <property type="term" value="P:cerebellar cortex morphogenesis"/>
    <property type="evidence" value="ECO:0000266"/>
    <property type="project" value="RGD"/>
</dbReference>
<dbReference type="GO" id="GO:0021987">
    <property type="term" value="P:cerebral cortex development"/>
    <property type="evidence" value="ECO:0000266"/>
    <property type="project" value="RGD"/>
</dbReference>
<dbReference type="GO" id="GO:0071679">
    <property type="term" value="P:commissural neuron axon guidance"/>
    <property type="evidence" value="ECO:0000315"/>
    <property type="project" value="RGD"/>
</dbReference>
<dbReference type="GO" id="GO:0060242">
    <property type="term" value="P:contact inhibition"/>
    <property type="evidence" value="ECO:0000266"/>
    <property type="project" value="RGD"/>
</dbReference>
<dbReference type="GO" id="GO:0021542">
    <property type="term" value="P:dentate gyrus development"/>
    <property type="evidence" value="ECO:0000266"/>
    <property type="project" value="RGD"/>
</dbReference>
<dbReference type="GO" id="GO:0003140">
    <property type="term" value="P:determination of left/right asymmetry in lateral mesoderm"/>
    <property type="evidence" value="ECO:0000250"/>
    <property type="project" value="UniProtKB"/>
</dbReference>
<dbReference type="GO" id="GO:0007368">
    <property type="term" value="P:determination of left/right symmetry"/>
    <property type="evidence" value="ECO:0000266"/>
    <property type="project" value="RGD"/>
</dbReference>
<dbReference type="GO" id="GO:0048589">
    <property type="term" value="P:developmental growth"/>
    <property type="evidence" value="ECO:0000266"/>
    <property type="project" value="RGD"/>
</dbReference>
<dbReference type="GO" id="GO:0048565">
    <property type="term" value="P:digestive tract development"/>
    <property type="evidence" value="ECO:0000266"/>
    <property type="project" value="RGD"/>
</dbReference>
<dbReference type="GO" id="GO:0071542">
    <property type="term" value="P:dopaminergic neuron differentiation"/>
    <property type="evidence" value="ECO:0000266"/>
    <property type="project" value="RGD"/>
</dbReference>
<dbReference type="GO" id="GO:0021904">
    <property type="term" value="P:dorsal/ventral neural tube patterning"/>
    <property type="evidence" value="ECO:0000266"/>
    <property type="project" value="RGD"/>
</dbReference>
<dbReference type="GO" id="GO:0009953">
    <property type="term" value="P:dorsal/ventral pattern formation"/>
    <property type="evidence" value="ECO:0000266"/>
    <property type="project" value="RGD"/>
</dbReference>
<dbReference type="GO" id="GO:0048568">
    <property type="term" value="P:embryonic organ development"/>
    <property type="evidence" value="ECO:0000266"/>
    <property type="project" value="RGD"/>
</dbReference>
<dbReference type="GO" id="GO:0030855">
    <property type="term" value="P:epithelial cell differentiation"/>
    <property type="evidence" value="ECO:0000266"/>
    <property type="project" value="RGD"/>
</dbReference>
<dbReference type="GO" id="GO:0050673">
    <property type="term" value="P:epithelial cell proliferation"/>
    <property type="evidence" value="ECO:0000266"/>
    <property type="project" value="RGD"/>
</dbReference>
<dbReference type="GO" id="GO:0060684">
    <property type="term" value="P:epithelial-mesenchymal cell signaling"/>
    <property type="evidence" value="ECO:0000266"/>
    <property type="project" value="RGD"/>
</dbReference>
<dbReference type="GO" id="GO:0021561">
    <property type="term" value="P:facial nerve development"/>
    <property type="evidence" value="ECO:0000270"/>
    <property type="project" value="RGD"/>
</dbReference>
<dbReference type="GO" id="GO:0048853">
    <property type="term" value="P:forebrain morphogenesis"/>
    <property type="evidence" value="ECO:0000250"/>
    <property type="project" value="UniProtKB"/>
</dbReference>
<dbReference type="GO" id="GO:0010467">
    <property type="term" value="P:gene expression"/>
    <property type="evidence" value="ECO:0000266"/>
    <property type="project" value="RGD"/>
</dbReference>
<dbReference type="GO" id="GO:0001942">
    <property type="term" value="P:hair follicle development"/>
    <property type="evidence" value="ECO:0000266"/>
    <property type="project" value="RGD"/>
</dbReference>
<dbReference type="GO" id="GO:0031069">
    <property type="term" value="P:hair follicle morphogenesis"/>
    <property type="evidence" value="ECO:0000266"/>
    <property type="project" value="RGD"/>
</dbReference>
<dbReference type="GO" id="GO:0001947">
    <property type="term" value="P:heart looping"/>
    <property type="evidence" value="ECO:0000250"/>
    <property type="project" value="UniProtKB"/>
</dbReference>
<dbReference type="GO" id="GO:0003007">
    <property type="term" value="P:heart morphogenesis"/>
    <property type="evidence" value="ECO:0000266"/>
    <property type="project" value="RGD"/>
</dbReference>
<dbReference type="GO" id="GO:0048873">
    <property type="term" value="P:homeostasis of number of cells within a tissue"/>
    <property type="evidence" value="ECO:0000266"/>
    <property type="project" value="RGD"/>
</dbReference>
<dbReference type="GO" id="GO:0001701">
    <property type="term" value="P:in utero embryonic development"/>
    <property type="evidence" value="ECO:0000266"/>
    <property type="project" value="RGD"/>
</dbReference>
<dbReference type="GO" id="GO:0070986">
    <property type="term" value="P:left/right axis specification"/>
    <property type="evidence" value="ECO:0000266"/>
    <property type="project" value="RGD"/>
</dbReference>
<dbReference type="GO" id="GO:0060644">
    <property type="term" value="P:mammary gland epithelial cell differentiation"/>
    <property type="evidence" value="ECO:0000266"/>
    <property type="project" value="RGD"/>
</dbReference>
<dbReference type="GO" id="GO:0060231">
    <property type="term" value="P:mesenchymal to epithelial transition"/>
    <property type="evidence" value="ECO:0000315"/>
    <property type="project" value="RGD"/>
</dbReference>
<dbReference type="GO" id="GO:0072285">
    <property type="term" value="P:mesenchymal to epithelial transition involved in metanephric renal vesicle formation"/>
    <property type="evidence" value="ECO:0000250"/>
    <property type="project" value="UniProtKB"/>
</dbReference>
<dbReference type="GO" id="GO:0007494">
    <property type="term" value="P:midgut development"/>
    <property type="evidence" value="ECO:0000250"/>
    <property type="project" value="UniProtKB"/>
</dbReference>
<dbReference type="GO" id="GO:0035264">
    <property type="term" value="P:multicellular organism growth"/>
    <property type="evidence" value="ECO:0000266"/>
    <property type="project" value="RGD"/>
</dbReference>
<dbReference type="GO" id="GO:0051451">
    <property type="term" value="P:myoblast migration"/>
    <property type="evidence" value="ECO:0000266"/>
    <property type="project" value="RGD"/>
</dbReference>
<dbReference type="GO" id="GO:0043066">
    <property type="term" value="P:negative regulation of apoptotic process"/>
    <property type="evidence" value="ECO:0000266"/>
    <property type="project" value="RGD"/>
</dbReference>
<dbReference type="GO" id="GO:0043392">
    <property type="term" value="P:negative regulation of DNA binding"/>
    <property type="evidence" value="ECO:0000250"/>
    <property type="project" value="UniProtKB"/>
</dbReference>
<dbReference type="GO" id="GO:0045892">
    <property type="term" value="P:negative regulation of DNA-templated transcription"/>
    <property type="evidence" value="ECO:0000266"/>
    <property type="project" value="RGD"/>
</dbReference>
<dbReference type="GO" id="GO:0030857">
    <property type="term" value="P:negative regulation of epithelial cell differentiation"/>
    <property type="evidence" value="ECO:0000266"/>
    <property type="project" value="RGD"/>
</dbReference>
<dbReference type="GO" id="GO:0010629">
    <property type="term" value="P:negative regulation of gene expression"/>
    <property type="evidence" value="ECO:0000250"/>
    <property type="project" value="UniProtKB"/>
</dbReference>
<dbReference type="GO" id="GO:0051799">
    <property type="term" value="P:negative regulation of hair follicle development"/>
    <property type="evidence" value="ECO:0000266"/>
    <property type="project" value="RGD"/>
</dbReference>
<dbReference type="GO" id="GO:2000346">
    <property type="term" value="P:negative regulation of hepatocyte proliferation"/>
    <property type="evidence" value="ECO:0000315"/>
    <property type="project" value="RGD"/>
</dbReference>
<dbReference type="GO" id="GO:0043524">
    <property type="term" value="P:negative regulation of neuron apoptotic process"/>
    <property type="evidence" value="ECO:0000315"/>
    <property type="project" value="RGD"/>
</dbReference>
<dbReference type="GO" id="GO:0001933">
    <property type="term" value="P:negative regulation of protein phosphorylation"/>
    <property type="evidence" value="ECO:0000250"/>
    <property type="project" value="UniProtKB"/>
</dbReference>
<dbReference type="GO" id="GO:0000122">
    <property type="term" value="P:negative regulation of transcription by RNA polymerase II"/>
    <property type="evidence" value="ECO:0000266"/>
    <property type="project" value="RGD"/>
</dbReference>
<dbReference type="GO" id="GO:0001755">
    <property type="term" value="P:neural crest cell migration"/>
    <property type="evidence" value="ECO:0000266"/>
    <property type="project" value="RGD"/>
</dbReference>
<dbReference type="GO" id="GO:0007405">
    <property type="term" value="P:neuroblast proliferation"/>
    <property type="evidence" value="ECO:0000266"/>
    <property type="project" value="RGD"/>
</dbReference>
<dbReference type="GO" id="GO:0031102">
    <property type="term" value="P:neuron projection regeneration"/>
    <property type="evidence" value="ECO:0000270"/>
    <property type="project" value="RGD"/>
</dbReference>
<dbReference type="GO" id="GO:0042475">
    <property type="term" value="P:odontogenesis of dentin-containing tooth"/>
    <property type="evidence" value="ECO:0000266"/>
    <property type="project" value="RGD"/>
</dbReference>
<dbReference type="GO" id="GO:0001503">
    <property type="term" value="P:ossification"/>
    <property type="evidence" value="ECO:0000266"/>
    <property type="project" value="RGD"/>
</dbReference>
<dbReference type="GO" id="GO:0001649">
    <property type="term" value="P:osteoblast differentiation"/>
    <property type="evidence" value="ECO:0000270"/>
    <property type="project" value="RGD"/>
</dbReference>
<dbReference type="GO" id="GO:0061113">
    <property type="term" value="P:pancreas morphogenesis"/>
    <property type="evidence" value="ECO:0000266"/>
    <property type="project" value="RGD"/>
</dbReference>
<dbReference type="GO" id="GO:0007389">
    <property type="term" value="P:pattern specification process"/>
    <property type="evidence" value="ECO:0000266"/>
    <property type="project" value="RGD"/>
</dbReference>
<dbReference type="GO" id="GO:0010508">
    <property type="term" value="P:positive regulation of autophagy"/>
    <property type="evidence" value="ECO:0000314"/>
    <property type="project" value="RGD"/>
</dbReference>
<dbReference type="GO" id="GO:0090190">
    <property type="term" value="P:positive regulation of branching involved in ureteric bud morphogenesis"/>
    <property type="evidence" value="ECO:0000250"/>
    <property type="project" value="UniProtKB"/>
</dbReference>
<dbReference type="GO" id="GO:0030335">
    <property type="term" value="P:positive regulation of cell migration"/>
    <property type="evidence" value="ECO:0000266"/>
    <property type="project" value="RGD"/>
</dbReference>
<dbReference type="GO" id="GO:0008284">
    <property type="term" value="P:positive regulation of cell population proliferation"/>
    <property type="evidence" value="ECO:0000314"/>
    <property type="project" value="RGD"/>
</dbReference>
<dbReference type="GO" id="GO:0045893">
    <property type="term" value="P:positive regulation of DNA-templated transcription"/>
    <property type="evidence" value="ECO:0000266"/>
    <property type="project" value="RGD"/>
</dbReference>
<dbReference type="GO" id="GO:0050679">
    <property type="term" value="P:positive regulation of epithelial cell proliferation"/>
    <property type="evidence" value="ECO:0000266"/>
    <property type="project" value="RGD"/>
</dbReference>
<dbReference type="GO" id="GO:0010628">
    <property type="term" value="P:positive regulation of gene expression"/>
    <property type="evidence" value="ECO:0000250"/>
    <property type="project" value="UniProtKB"/>
</dbReference>
<dbReference type="GO" id="GO:2000491">
    <property type="term" value="P:positive regulation of hepatic stellate cell activation"/>
    <property type="evidence" value="ECO:0000315"/>
    <property type="project" value="RGD"/>
</dbReference>
<dbReference type="GO" id="GO:0002053">
    <property type="term" value="P:positive regulation of mesenchymal cell proliferation"/>
    <property type="evidence" value="ECO:0000266"/>
    <property type="project" value="RGD"/>
</dbReference>
<dbReference type="GO" id="GO:0040018">
    <property type="term" value="P:positive regulation of multicellular organism growth"/>
    <property type="evidence" value="ECO:0000266"/>
    <property type="project" value="RGD"/>
</dbReference>
<dbReference type="GO" id="GO:2000179">
    <property type="term" value="P:positive regulation of neural precursor cell proliferation"/>
    <property type="evidence" value="ECO:0000315"/>
    <property type="project" value="RGD"/>
</dbReference>
<dbReference type="GO" id="GO:0002052">
    <property type="term" value="P:positive regulation of neuroblast proliferation"/>
    <property type="evidence" value="ECO:0000266"/>
    <property type="project" value="RGD"/>
</dbReference>
<dbReference type="GO" id="GO:0046622">
    <property type="term" value="P:positive regulation of organ growth"/>
    <property type="evidence" value="ECO:0000266"/>
    <property type="project" value="RGD"/>
</dbReference>
<dbReference type="GO" id="GO:0042307">
    <property type="term" value="P:positive regulation of protein import into nucleus"/>
    <property type="evidence" value="ECO:0000266"/>
    <property type="project" value="RGD"/>
</dbReference>
<dbReference type="GO" id="GO:0045880">
    <property type="term" value="P:positive regulation of smoothened signaling pathway"/>
    <property type="evidence" value="ECO:0000266"/>
    <property type="project" value="RGD"/>
</dbReference>
<dbReference type="GO" id="GO:0045944">
    <property type="term" value="P:positive regulation of transcription by RNA polymerase II"/>
    <property type="evidence" value="ECO:0000250"/>
    <property type="project" value="UniProtKB"/>
</dbReference>
<dbReference type="GO" id="GO:1904754">
    <property type="term" value="P:positive regulation of vascular associated smooth muscle cell migration"/>
    <property type="evidence" value="ECO:0000315"/>
    <property type="project" value="RGD"/>
</dbReference>
<dbReference type="GO" id="GO:0006606">
    <property type="term" value="P:protein import into nucleus"/>
    <property type="evidence" value="ECO:0000266"/>
    <property type="project" value="RGD"/>
</dbReference>
<dbReference type="GO" id="GO:0034504">
    <property type="term" value="P:protein localization to nucleus"/>
    <property type="evidence" value="ECO:0000266"/>
    <property type="project" value="RGD"/>
</dbReference>
<dbReference type="GO" id="GO:0050821">
    <property type="term" value="P:protein stabilization"/>
    <property type="evidence" value="ECO:0000266"/>
    <property type="project" value="RGD"/>
</dbReference>
<dbReference type="GO" id="GO:0010468">
    <property type="term" value="P:regulation of gene expression"/>
    <property type="evidence" value="ECO:0000266"/>
    <property type="project" value="RGD"/>
</dbReference>
<dbReference type="GO" id="GO:2000826">
    <property type="term" value="P:regulation of heart morphogenesis"/>
    <property type="evidence" value="ECO:0000266"/>
    <property type="project" value="RGD"/>
</dbReference>
<dbReference type="GO" id="GO:1904672">
    <property type="term" value="P:regulation of somatic stem cell population maintenance"/>
    <property type="evidence" value="ECO:0000266"/>
    <property type="project" value="RGD"/>
</dbReference>
<dbReference type="GO" id="GO:1902140">
    <property type="term" value="P:response to inositol"/>
    <property type="evidence" value="ECO:0000266"/>
    <property type="project" value="RGD"/>
</dbReference>
<dbReference type="GO" id="GO:0048741">
    <property type="term" value="P:skeletal muscle fiber development"/>
    <property type="evidence" value="ECO:0000266"/>
    <property type="project" value="RGD"/>
</dbReference>
<dbReference type="GO" id="GO:0048745">
    <property type="term" value="P:smooth muscle tissue development"/>
    <property type="evidence" value="ECO:0000266"/>
    <property type="project" value="RGD"/>
</dbReference>
<dbReference type="GO" id="GO:0007224">
    <property type="term" value="P:smoothened signaling pathway"/>
    <property type="evidence" value="ECO:0000250"/>
    <property type="project" value="UniProtKB"/>
</dbReference>
<dbReference type="GO" id="GO:0061053">
    <property type="term" value="P:somite development"/>
    <property type="evidence" value="ECO:0000250"/>
    <property type="project" value="UniProtKB"/>
</dbReference>
<dbReference type="GO" id="GO:0007283">
    <property type="term" value="P:spermatogenesis"/>
    <property type="evidence" value="ECO:0000270"/>
    <property type="project" value="RGD"/>
</dbReference>
<dbReference type="GO" id="GO:0021513">
    <property type="term" value="P:spinal cord dorsal/ventral patterning"/>
    <property type="evidence" value="ECO:0000266"/>
    <property type="project" value="RGD"/>
</dbReference>
<dbReference type="GO" id="GO:0021794">
    <property type="term" value="P:thalamus development"/>
    <property type="evidence" value="ECO:0000266"/>
    <property type="project" value="RGD"/>
</dbReference>
<dbReference type="GO" id="GO:0003323">
    <property type="term" value="P:type B pancreatic cell development"/>
    <property type="evidence" value="ECO:0000266"/>
    <property type="project" value="RGD"/>
</dbReference>
<dbReference type="GO" id="GO:0001570">
    <property type="term" value="P:vasculogenesis"/>
    <property type="evidence" value="ECO:0000266"/>
    <property type="project" value="RGD"/>
</dbReference>
<dbReference type="GO" id="GO:0007371">
    <property type="term" value="P:ventral midline determination"/>
    <property type="evidence" value="ECO:0000266"/>
    <property type="project" value="RGD"/>
</dbReference>
<dbReference type="CDD" id="cd15030">
    <property type="entry name" value="7tmF_SMO_homolog"/>
    <property type="match status" value="1"/>
</dbReference>
<dbReference type="CDD" id="cd07451">
    <property type="entry name" value="CRD_SMO"/>
    <property type="match status" value="1"/>
</dbReference>
<dbReference type="FunFam" id="1.10.2000.10:FF:000010">
    <property type="entry name" value="Smoothened, frizzled class receptor"/>
    <property type="match status" value="1"/>
</dbReference>
<dbReference type="FunFam" id="1.20.1070.10:FF:000068">
    <property type="entry name" value="Smoothened, frizzled class receptor"/>
    <property type="match status" value="1"/>
</dbReference>
<dbReference type="Gene3D" id="1.10.2000.10">
    <property type="entry name" value="Frizzled cysteine-rich domain"/>
    <property type="match status" value="1"/>
</dbReference>
<dbReference type="Gene3D" id="1.20.1070.10">
    <property type="entry name" value="Rhodopsin 7-helix transmembrane proteins"/>
    <property type="match status" value="1"/>
</dbReference>
<dbReference type="InterPro" id="IPR015526">
    <property type="entry name" value="Frizzled/SFRP"/>
</dbReference>
<dbReference type="InterPro" id="IPR000539">
    <property type="entry name" value="Frizzled/Smoothened_7TM"/>
</dbReference>
<dbReference type="InterPro" id="IPR020067">
    <property type="entry name" value="Frizzled_dom"/>
</dbReference>
<dbReference type="InterPro" id="IPR036790">
    <property type="entry name" value="Frizzled_dom_sf"/>
</dbReference>
<dbReference type="InterPro" id="IPR017981">
    <property type="entry name" value="GPCR_2-like_7TM"/>
</dbReference>
<dbReference type="InterPro" id="IPR035683">
    <property type="entry name" value="SMO_7TM"/>
</dbReference>
<dbReference type="InterPro" id="IPR041771">
    <property type="entry name" value="SMO_CRD"/>
</dbReference>
<dbReference type="PANTHER" id="PTHR11309">
    <property type="entry name" value="FRIZZLED"/>
    <property type="match status" value="1"/>
</dbReference>
<dbReference type="PANTHER" id="PTHR11309:SF35">
    <property type="entry name" value="PROTEIN SMOOTHENED"/>
    <property type="match status" value="1"/>
</dbReference>
<dbReference type="Pfam" id="PF01534">
    <property type="entry name" value="Frizzled"/>
    <property type="match status" value="1"/>
</dbReference>
<dbReference type="Pfam" id="PF01392">
    <property type="entry name" value="Fz"/>
    <property type="match status" value="1"/>
</dbReference>
<dbReference type="PRINTS" id="PR00489">
    <property type="entry name" value="FRIZZLED"/>
</dbReference>
<dbReference type="SMART" id="SM00063">
    <property type="entry name" value="FRI"/>
    <property type="match status" value="1"/>
</dbReference>
<dbReference type="SMART" id="SM01330">
    <property type="entry name" value="Frizzled"/>
    <property type="match status" value="1"/>
</dbReference>
<dbReference type="SUPFAM" id="SSF63501">
    <property type="entry name" value="Frizzled cysteine-rich domain"/>
    <property type="match status" value="1"/>
</dbReference>
<dbReference type="PROSITE" id="PS50038">
    <property type="entry name" value="FZ"/>
    <property type="match status" value="1"/>
</dbReference>
<dbReference type="PROSITE" id="PS50261">
    <property type="entry name" value="G_PROTEIN_RECEP_F2_4"/>
    <property type="match status" value="1"/>
</dbReference>
<protein>
    <recommendedName>
        <fullName>Protein smoothened</fullName>
    </recommendedName>
</protein>
<feature type="signal peptide" evidence="3">
    <location>
        <begin position="1"/>
        <end position="30"/>
    </location>
</feature>
<feature type="chain" id="PRO_0000013017" description="Protein smoothened">
    <location>
        <begin position="31"/>
        <end position="793"/>
    </location>
</feature>
<feature type="topological domain" description="Extracellular" evidence="3">
    <location>
        <begin position="31"/>
        <end position="237"/>
    </location>
</feature>
<feature type="transmembrane region" description="Helical; Name=1" evidence="3">
    <location>
        <begin position="238"/>
        <end position="258"/>
    </location>
</feature>
<feature type="topological domain" description="Cytoplasmic" evidence="3">
    <location>
        <begin position="259"/>
        <end position="266"/>
    </location>
</feature>
<feature type="transmembrane region" description="Helical; Name=2" evidence="3">
    <location>
        <begin position="267"/>
        <end position="287"/>
    </location>
</feature>
<feature type="topological domain" description="Extracellular" evidence="3">
    <location>
        <begin position="288"/>
        <end position="318"/>
    </location>
</feature>
<feature type="transmembrane region" description="Helical; Name=3" evidence="3">
    <location>
        <begin position="319"/>
        <end position="339"/>
    </location>
</feature>
<feature type="topological domain" description="Cytoplasmic" evidence="3">
    <location>
        <begin position="340"/>
        <end position="362"/>
    </location>
</feature>
<feature type="transmembrane region" description="Helical; Name=4" evidence="3">
    <location>
        <begin position="363"/>
        <end position="383"/>
    </location>
</feature>
<feature type="topological domain" description="Extracellular" evidence="3">
    <location>
        <begin position="384"/>
        <end position="406"/>
    </location>
</feature>
<feature type="transmembrane region" description="Helical; Name=5" evidence="3">
    <location>
        <begin position="407"/>
        <end position="427"/>
    </location>
</feature>
<feature type="topological domain" description="Cytoplasmic" evidence="3">
    <location>
        <begin position="428"/>
        <end position="455"/>
    </location>
</feature>
<feature type="transmembrane region" description="Helical; Name=6" evidence="3">
    <location>
        <begin position="456"/>
        <end position="476"/>
    </location>
</feature>
<feature type="topological domain" description="Extracellular" evidence="3">
    <location>
        <begin position="477"/>
        <end position="528"/>
    </location>
</feature>
<feature type="transmembrane region" description="Helical; Name=7" evidence="3">
    <location>
        <begin position="529"/>
        <end position="549"/>
    </location>
</feature>
<feature type="topological domain" description="Cytoplasmic" evidence="3">
    <location>
        <begin position="550"/>
        <end position="793"/>
    </location>
</feature>
<feature type="domain" description="FZ" evidence="4">
    <location>
        <begin position="69"/>
        <end position="185"/>
    </location>
</feature>
<feature type="region of interest" description="Disordered" evidence="5">
    <location>
        <begin position="35"/>
        <end position="61"/>
    </location>
</feature>
<feature type="region of interest" description="Interaction with BBS5 and BBS7" evidence="1">
    <location>
        <begin position="542"/>
        <end position="573"/>
    </location>
</feature>
<feature type="region of interest" description="Required for interaction with PRKACA" evidence="1">
    <location>
        <begin position="574"/>
        <end position="657"/>
    </location>
</feature>
<feature type="region of interest" description="Interaction with DLG5" evidence="1">
    <location>
        <begin position="585"/>
        <end position="597"/>
    </location>
</feature>
<feature type="region of interest" description="Disordered" evidence="5">
    <location>
        <begin position="674"/>
        <end position="702"/>
    </location>
</feature>
<feature type="compositionally biased region" description="Basic residues" evidence="5">
    <location>
        <begin position="674"/>
        <end position="684"/>
    </location>
</feature>
<feature type="binding site" evidence="1">
    <location>
        <position position="99"/>
    </location>
    <ligand>
        <name>cholesterol</name>
        <dbReference type="ChEBI" id="CHEBI:16113"/>
    </ligand>
</feature>
<feature type="binding site" evidence="1">
    <location>
        <position position="398"/>
    </location>
    <ligand>
        <name>cholesterol</name>
        <dbReference type="ChEBI" id="CHEBI:16113"/>
    </ligand>
</feature>
<feature type="modified residue" description="Phosphoserine" evidence="1">
    <location>
        <position position="560"/>
    </location>
</feature>
<feature type="modified residue" description="Phosphoserine" evidence="1">
    <location>
        <position position="578"/>
    </location>
</feature>
<feature type="modified residue" description="Phosphoserine" evidence="1">
    <location>
        <position position="594"/>
    </location>
</feature>
<feature type="modified residue" description="Phosphothreonine" evidence="1">
    <location>
        <position position="597"/>
    </location>
</feature>
<feature type="modified residue" description="Phosphoserine" evidence="1">
    <location>
        <position position="599"/>
    </location>
</feature>
<feature type="modified residue" description="Phosphoserine" evidence="1">
    <location>
        <position position="642"/>
    </location>
</feature>
<feature type="modified residue" description="Phosphothreonine" evidence="1">
    <location>
        <position position="644"/>
    </location>
</feature>
<feature type="modified residue" description="Phosphothreonine" evidence="1">
    <location>
        <position position="648"/>
    </location>
</feature>
<feature type="modified residue" description="Phosphoserine" evidence="1">
    <location>
        <position position="666"/>
    </location>
</feature>
<feature type="glycosylation site" description="N-linked (GlcNAc...) asparagine" evidence="3">
    <location>
        <position position="38"/>
    </location>
</feature>
<feature type="glycosylation site" description="N-linked (GlcNAc...) asparagine" evidence="3">
    <location>
        <position position="192"/>
    </location>
</feature>
<feature type="glycosylation site" description="N-linked (GlcNAc...) asparagine" evidence="3">
    <location>
        <position position="497"/>
    </location>
</feature>
<feature type="disulfide bond" evidence="1">
    <location>
        <begin position="68"/>
        <end position="182"/>
    </location>
</feature>
<feature type="disulfide bond" evidence="4">
    <location>
        <begin position="74"/>
        <end position="138"/>
    </location>
</feature>
<feature type="disulfide bond" evidence="4">
    <location>
        <begin position="82"/>
        <end position="131"/>
    </location>
</feature>
<feature type="disulfide bond" evidence="4">
    <location>
        <begin position="122"/>
        <end position="158"/>
    </location>
</feature>
<feature type="disulfide bond" evidence="4">
    <location>
        <begin position="151"/>
        <end position="173"/>
    </location>
</feature>
<feature type="disulfide bond" evidence="2">
    <location>
        <begin position="197"/>
        <end position="217"/>
    </location>
</feature>
<feature type="disulfide bond" evidence="2">
    <location>
        <begin position="221"/>
        <end position="299"/>
    </location>
</feature>
<feature type="disulfide bond" evidence="2">
    <location>
        <begin position="318"/>
        <end position="394"/>
    </location>
</feature>
<feature type="disulfide bond" evidence="2">
    <location>
        <begin position="494"/>
        <end position="511"/>
    </location>
</feature>
<name>SMO_RAT</name>
<proteinExistence type="evidence at transcript level"/>
<evidence type="ECO:0000250" key="1">
    <source>
        <dbReference type="UniProtKB" id="P56726"/>
    </source>
</evidence>
<evidence type="ECO:0000250" key="2">
    <source>
        <dbReference type="UniProtKB" id="Q99835"/>
    </source>
</evidence>
<evidence type="ECO:0000255" key="3"/>
<evidence type="ECO:0000255" key="4">
    <source>
        <dbReference type="PROSITE-ProRule" id="PRU00090"/>
    </source>
</evidence>
<evidence type="ECO:0000256" key="5">
    <source>
        <dbReference type="SAM" id="MobiDB-lite"/>
    </source>
</evidence>
<evidence type="ECO:0000305" key="6"/>
<accession>P97698</accession>
<organism>
    <name type="scientific">Rattus norvegicus</name>
    <name type="common">Rat</name>
    <dbReference type="NCBI Taxonomy" id="10116"/>
    <lineage>
        <taxon>Eukaryota</taxon>
        <taxon>Metazoa</taxon>
        <taxon>Chordata</taxon>
        <taxon>Craniata</taxon>
        <taxon>Vertebrata</taxon>
        <taxon>Euteleostomi</taxon>
        <taxon>Mammalia</taxon>
        <taxon>Eutheria</taxon>
        <taxon>Euarchontoglires</taxon>
        <taxon>Glires</taxon>
        <taxon>Rodentia</taxon>
        <taxon>Myomorpha</taxon>
        <taxon>Muroidea</taxon>
        <taxon>Muridae</taxon>
        <taxon>Murinae</taxon>
        <taxon>Rattus</taxon>
    </lineage>
</organism>
<sequence>MAAGRPVRGPELAPRRLLQLLLLVLLGGRGRGAALSGNVTGPGPRSAGGSARRNAPVTSPPPPLLSHCGRAAHCEPLRYNVCLGSALPYGATTTLLAGDSDSQEEAHSKLVLWSGLRNAPRCWAVIQPLLCAVYMPKCENDRVELPSRTLCQATRGPCAIVERERGWPDFLRCTPDHFPEGCPNEVQNIKFNSSGQCEAPLVRTDNPKSWYEDVEGCGIQCQNPLFTEAEHQDMHSYIAAFGAVTGLCTLFTLATFVADWRNSNRYPAVILFYVNACFFVGSIGWLAQFMDGARREIVCRADGTMRFGEPTSSETLSCVIIFVIVYYALMAGVVWFVVLTYAWHTSFKALGTTYQPLSGKTSYFHLLTWSLPFVLTVAILAVAQVDGDSVSGICFVGYKNYRYRAGFVLAPIGLVLIVGGYFLIRGVMTLFSIKSNHPGLLSEKAASKINETMLRLGIFGFLAFGFVLITFSCHFYDFFNQAEWERSFRDYVLCQANVTIGLPTKKPIPDCEIKNRPSLLVEKINLFAMFGTGIAMSTWVWTKATLLIWRRTWCRLTGHSDDEPKRIKKSKMIAKAFSKRRELLQNPGQELSFSMHTVSHDGPVAGLAFELNEPSADVSSAWAQHVTKMVARRGAILPQDVSVTPVATPVPPEEQANLWLVEAEISPELEKRLGRKKKRRKRKKEVCPLGPAPELHHSAPVPATSAVPRLPQLPRQKCLVAANAWGTGEPCRQGAWTVVSNPFCPEPSPHQDPFLPGASAPRVWAQGRLQGLGSIHSRTNLMEAELLDADSDF</sequence>
<gene>
    <name type="primary">Smo</name>
    <name type="synonym">Smoh</name>
</gene>
<keyword id="KW-1003">Cell membrane</keyword>
<keyword id="KW-0966">Cell projection</keyword>
<keyword id="KW-0217">Developmental protein</keyword>
<keyword id="KW-1015">Disulfide bond</keyword>
<keyword id="KW-0297">G-protein coupled receptor</keyword>
<keyword id="KW-0325">Glycoprotein</keyword>
<keyword id="KW-0472">Membrane</keyword>
<keyword id="KW-0597">Phosphoprotein</keyword>
<keyword id="KW-0675">Receptor</keyword>
<keyword id="KW-1185">Reference proteome</keyword>
<keyword id="KW-0732">Signal</keyword>
<keyword id="KW-0807">Transducer</keyword>
<keyword id="KW-0812">Transmembrane</keyword>
<keyword id="KW-1133">Transmembrane helix</keyword>
<reference key="1">
    <citation type="journal article" date="1996" name="Nature">
        <title>The tumour-suppressor gene patched encodes a candidate receptor for Sonic hedgehog.</title>
        <authorList>
            <person name="Stone D.M."/>
            <person name="Hynes M."/>
            <person name="Armanini M."/>
            <person name="Swanson T.A."/>
            <person name="Gu Q."/>
            <person name="Johnson R.L."/>
            <person name="Scott M.P."/>
            <person name="Pennica D."/>
            <person name="Goddard A."/>
            <person name="Phillips H."/>
            <person name="Noll M."/>
            <person name="Hooper J.E."/>
            <person name="de Sauvage F."/>
            <person name="Rosenthal A."/>
        </authorList>
    </citation>
    <scope>NUCLEOTIDE SEQUENCE [MRNA]</scope>
    <source>
        <tissue>Embryo</tissue>
    </source>
</reference>